<dbReference type="EMBL" id="AY289610">
    <property type="protein sequence ID" value="AAP47610.1"/>
    <property type="molecule type" value="Genomic_DNA"/>
</dbReference>
<dbReference type="EMBL" id="AB161012">
    <property type="protein sequence ID" value="BAD32755.1"/>
    <property type="molecule type" value="Genomic_DNA"/>
</dbReference>
<dbReference type="RefSeq" id="YP_008082797.1">
    <property type="nucleotide sequence ID" value="NC_021456.1"/>
</dbReference>
<dbReference type="GeneID" id="16185445"/>
<dbReference type="GO" id="GO:0009507">
    <property type="term" value="C:chloroplast"/>
    <property type="evidence" value="ECO:0007669"/>
    <property type="project" value="UniProtKB-SubCell"/>
</dbReference>
<dbReference type="GO" id="GO:0003723">
    <property type="term" value="F:RNA binding"/>
    <property type="evidence" value="ECO:0007669"/>
    <property type="project" value="UniProtKB-KW"/>
</dbReference>
<dbReference type="GO" id="GO:0006397">
    <property type="term" value="P:mRNA processing"/>
    <property type="evidence" value="ECO:0007669"/>
    <property type="project" value="UniProtKB-KW"/>
</dbReference>
<dbReference type="GO" id="GO:0008380">
    <property type="term" value="P:RNA splicing"/>
    <property type="evidence" value="ECO:0007669"/>
    <property type="project" value="UniProtKB-UniRule"/>
</dbReference>
<dbReference type="GO" id="GO:0008033">
    <property type="term" value="P:tRNA processing"/>
    <property type="evidence" value="ECO:0007669"/>
    <property type="project" value="UniProtKB-KW"/>
</dbReference>
<dbReference type="HAMAP" id="MF_01390">
    <property type="entry name" value="MatK"/>
    <property type="match status" value="1"/>
</dbReference>
<dbReference type="InterPro" id="IPR024937">
    <property type="entry name" value="Domain_X"/>
</dbReference>
<dbReference type="InterPro" id="IPR002866">
    <property type="entry name" value="Maturase_MatK"/>
</dbReference>
<dbReference type="InterPro" id="IPR024942">
    <property type="entry name" value="Maturase_MatK_N"/>
</dbReference>
<dbReference type="PANTHER" id="PTHR34811">
    <property type="entry name" value="MATURASE K"/>
    <property type="match status" value="1"/>
</dbReference>
<dbReference type="PANTHER" id="PTHR34811:SF1">
    <property type="entry name" value="MATURASE K"/>
    <property type="match status" value="1"/>
</dbReference>
<dbReference type="Pfam" id="PF01348">
    <property type="entry name" value="Intron_maturas2"/>
    <property type="match status" value="1"/>
</dbReference>
<dbReference type="Pfam" id="PF01824">
    <property type="entry name" value="MatK_N"/>
    <property type="match status" value="1"/>
</dbReference>
<comment type="function">
    <text evidence="1">Usually encoded in the trnK tRNA gene intron. Probably assists in splicing its own and other chloroplast group II introns.</text>
</comment>
<comment type="subcellular location">
    <subcellularLocation>
        <location>Plastid</location>
        <location>Chloroplast</location>
    </subcellularLocation>
</comment>
<comment type="similarity">
    <text evidence="1">Belongs to the intron maturase 2 family. MatK subfamily.</text>
</comment>
<accession>Q6BDH5</accession>
<accession>Q7YMJ6</accession>
<keyword id="KW-0150">Chloroplast</keyword>
<keyword id="KW-0507">mRNA processing</keyword>
<keyword id="KW-0934">Plastid</keyword>
<keyword id="KW-0694">RNA-binding</keyword>
<keyword id="KW-0819">tRNA processing</keyword>
<proteinExistence type="inferred from homology"/>
<feature type="chain" id="PRO_0000143594" description="Maturase K">
    <location>
        <begin position="1"/>
        <end position="515"/>
    </location>
</feature>
<feature type="sequence conflict" description="In Ref. 1; AAP47610." evidence="2" ref="1">
    <original>F</original>
    <variation>S</variation>
    <location>
        <position position="318"/>
    </location>
</feature>
<name>MATK_PICAB</name>
<evidence type="ECO:0000255" key="1">
    <source>
        <dbReference type="HAMAP-Rule" id="MF_01390"/>
    </source>
</evidence>
<evidence type="ECO:0000305" key="2"/>
<protein>
    <recommendedName>
        <fullName evidence="1">Maturase K</fullName>
    </recommendedName>
    <alternativeName>
        <fullName evidence="1">Intron maturase</fullName>
    </alternativeName>
</protein>
<organism>
    <name type="scientific">Picea abies</name>
    <name type="common">Norway spruce</name>
    <name type="synonym">Picea excelsa</name>
    <dbReference type="NCBI Taxonomy" id="3329"/>
    <lineage>
        <taxon>Eukaryota</taxon>
        <taxon>Viridiplantae</taxon>
        <taxon>Streptophyta</taxon>
        <taxon>Embryophyta</taxon>
        <taxon>Tracheophyta</taxon>
        <taxon>Spermatophyta</taxon>
        <taxon>Pinopsida</taxon>
        <taxon>Pinidae</taxon>
        <taxon>Conifers I</taxon>
        <taxon>Pinales</taxon>
        <taxon>Pinaceae</taxon>
        <taxon>Picea</taxon>
    </lineage>
</organism>
<reference key="1">
    <citation type="submission" date="2003-05" db="EMBL/GenBank/DDBJ databases">
        <title>Chloroplast and mitochondrial DNA evidence for the evolution of Picea.</title>
        <authorList>
            <person name="Germano-Presby J."/>
            <person name="Roy R.A."/>
            <person name="Klein A.S."/>
        </authorList>
    </citation>
    <scope>NUCLEOTIDE SEQUENCE [GENOMIC DNA]</scope>
</reference>
<reference key="2">
    <citation type="submission" date="2004-01" db="EMBL/GenBank/DDBJ databases">
        <title>Phylogeny and classification of Pinus.</title>
        <authorList>
            <person name="Gernandt D."/>
            <person name="Geada-Lopez G."/>
            <person name="Liston A."/>
        </authorList>
    </citation>
    <scope>NUCLEOTIDE SEQUENCE [GENOMIC DNA]</scope>
    <source>
        <tissue>Leaf</tissue>
    </source>
</reference>
<geneLocation type="chloroplast"/>
<gene>
    <name evidence="1" type="primary">matK</name>
</gene>
<sequence length="515" mass="60952">MDEFHRYGKEDSSWQQCFLYPLFFQEDLYAISHDHYLDGSSSSEPMEHLSSNDQFSFLTVKRLIGQIRQQNHSIVLFVNCDPNPLVDRKKSSYSESVLEGLTLVLEVPFSIRSKYSVEGMNEWKSFRSIHSIFPFLEDKFPHSNYVSDTRIPYSIHPEILVRTFRRWIGDAPSLHPLRSILYEYRNSSESLQRSIIVVPKVNTRFFLFLWNNYVYECESILVSLLKRSSHSRSLSHGSFPQRTHFHRKIKNIFLFSRRNSFQSIWSLKDPNIHYVRYGERSIIAIKGTHLLVKKYRYYLPIFRQCYFHLWNEPYRVCFHQLSKNCSSSLGYFLRVRMKPLLVKTKMLDELFIADLITDEFDPIVPIVPIIGLLSREKFCDISGRPISKLSWTSLTDDDILDRFDRIWRNLFHYYSGSFGRDGLYRIKYILSLSCAKTLACKHKSTIRVVRKELGPELFKKSFSKERELDSPPFSSKAAARSQRERIWHSDIPQINPLAHSWQKIQDLKIENLFDQ</sequence>